<reference key="1">
    <citation type="journal article" date="2003" name="Nature">
        <title>Genome sequence of Bacillus cereus and comparative analysis with Bacillus anthracis.</title>
        <authorList>
            <person name="Ivanova N."/>
            <person name="Sorokin A."/>
            <person name="Anderson I."/>
            <person name="Galleron N."/>
            <person name="Candelon B."/>
            <person name="Kapatral V."/>
            <person name="Bhattacharyya A."/>
            <person name="Reznik G."/>
            <person name="Mikhailova N."/>
            <person name="Lapidus A."/>
            <person name="Chu L."/>
            <person name="Mazur M."/>
            <person name="Goltsman E."/>
            <person name="Larsen N."/>
            <person name="D'Souza M."/>
            <person name="Walunas T."/>
            <person name="Grechkin Y."/>
            <person name="Pusch G."/>
            <person name="Haselkorn R."/>
            <person name="Fonstein M."/>
            <person name="Ehrlich S.D."/>
            <person name="Overbeek R."/>
            <person name="Kyrpides N.C."/>
        </authorList>
    </citation>
    <scope>NUCLEOTIDE SEQUENCE [LARGE SCALE GENOMIC DNA]</scope>
    <source>
        <strain>ATCC 14579 / DSM 31 / CCUG 7414 / JCM 2152 / NBRC 15305 / NCIMB 9373 / NCTC 2599 / NRRL B-3711</strain>
    </source>
</reference>
<accession>Q81G09</accession>
<gene>
    <name evidence="1" type="primary">leuD</name>
    <name type="ordered locus">BC_1403</name>
</gene>
<dbReference type="EC" id="4.2.1.33" evidence="1"/>
<dbReference type="EMBL" id="AE016877">
    <property type="protein sequence ID" value="AAP08384.1"/>
    <property type="molecule type" value="Genomic_DNA"/>
</dbReference>
<dbReference type="RefSeq" id="NP_831183.1">
    <property type="nucleotide sequence ID" value="NC_004722.1"/>
</dbReference>
<dbReference type="SMR" id="Q81G09"/>
<dbReference type="STRING" id="226900.BC_1403"/>
<dbReference type="KEGG" id="bce:BC1403"/>
<dbReference type="PATRIC" id="fig|226900.8.peg.1380"/>
<dbReference type="HOGENOM" id="CLU_081378_0_3_9"/>
<dbReference type="UniPathway" id="UPA00048">
    <property type="reaction ID" value="UER00071"/>
</dbReference>
<dbReference type="Proteomes" id="UP000001417">
    <property type="component" value="Chromosome"/>
</dbReference>
<dbReference type="GO" id="GO:0009316">
    <property type="term" value="C:3-isopropylmalate dehydratase complex"/>
    <property type="evidence" value="ECO:0007669"/>
    <property type="project" value="InterPro"/>
</dbReference>
<dbReference type="GO" id="GO:0003861">
    <property type="term" value="F:3-isopropylmalate dehydratase activity"/>
    <property type="evidence" value="ECO:0007669"/>
    <property type="project" value="UniProtKB-UniRule"/>
</dbReference>
<dbReference type="GO" id="GO:0009098">
    <property type="term" value="P:L-leucine biosynthetic process"/>
    <property type="evidence" value="ECO:0007669"/>
    <property type="project" value="UniProtKB-UniRule"/>
</dbReference>
<dbReference type="CDD" id="cd01577">
    <property type="entry name" value="IPMI_Swivel"/>
    <property type="match status" value="1"/>
</dbReference>
<dbReference type="FunFam" id="3.20.19.10:FF:000003">
    <property type="entry name" value="3-isopropylmalate dehydratase small subunit"/>
    <property type="match status" value="1"/>
</dbReference>
<dbReference type="Gene3D" id="3.20.19.10">
    <property type="entry name" value="Aconitase, domain 4"/>
    <property type="match status" value="1"/>
</dbReference>
<dbReference type="HAMAP" id="MF_01031">
    <property type="entry name" value="LeuD_type1"/>
    <property type="match status" value="1"/>
</dbReference>
<dbReference type="InterPro" id="IPR004431">
    <property type="entry name" value="3-IsopropMal_deHydase_ssu"/>
</dbReference>
<dbReference type="InterPro" id="IPR015928">
    <property type="entry name" value="Aconitase/3IPM_dehydase_swvl"/>
</dbReference>
<dbReference type="InterPro" id="IPR000573">
    <property type="entry name" value="AconitaseA/IPMdHydase_ssu_swvl"/>
</dbReference>
<dbReference type="InterPro" id="IPR033940">
    <property type="entry name" value="IPMI_Swivel"/>
</dbReference>
<dbReference type="InterPro" id="IPR050075">
    <property type="entry name" value="LeuD"/>
</dbReference>
<dbReference type="NCBIfam" id="TIGR00171">
    <property type="entry name" value="leuD"/>
    <property type="match status" value="1"/>
</dbReference>
<dbReference type="NCBIfam" id="NF002458">
    <property type="entry name" value="PRK01641.1"/>
    <property type="match status" value="1"/>
</dbReference>
<dbReference type="PANTHER" id="PTHR43345:SF5">
    <property type="entry name" value="3-ISOPROPYLMALATE DEHYDRATASE SMALL SUBUNIT"/>
    <property type="match status" value="1"/>
</dbReference>
<dbReference type="PANTHER" id="PTHR43345">
    <property type="entry name" value="3-ISOPROPYLMALATE DEHYDRATASE SMALL SUBUNIT 2-RELATED-RELATED"/>
    <property type="match status" value="1"/>
</dbReference>
<dbReference type="Pfam" id="PF00694">
    <property type="entry name" value="Aconitase_C"/>
    <property type="match status" value="1"/>
</dbReference>
<dbReference type="SUPFAM" id="SSF52016">
    <property type="entry name" value="LeuD/IlvD-like"/>
    <property type="match status" value="1"/>
</dbReference>
<comment type="function">
    <text evidence="1">Catalyzes the isomerization between 2-isopropylmalate and 3-isopropylmalate, via the formation of 2-isopropylmaleate.</text>
</comment>
<comment type="catalytic activity">
    <reaction evidence="1">
        <text>(2R,3S)-3-isopropylmalate = (2S)-2-isopropylmalate</text>
        <dbReference type="Rhea" id="RHEA:32287"/>
        <dbReference type="ChEBI" id="CHEBI:1178"/>
        <dbReference type="ChEBI" id="CHEBI:35121"/>
        <dbReference type="EC" id="4.2.1.33"/>
    </reaction>
</comment>
<comment type="pathway">
    <text evidence="1">Amino-acid biosynthesis; L-leucine biosynthesis; L-leucine from 3-methyl-2-oxobutanoate: step 2/4.</text>
</comment>
<comment type="subunit">
    <text evidence="1">Heterodimer of LeuC and LeuD.</text>
</comment>
<comment type="similarity">
    <text evidence="1">Belongs to the LeuD family. LeuD type 1 subfamily.</text>
</comment>
<name>LEUD_BACCR</name>
<organism>
    <name type="scientific">Bacillus cereus (strain ATCC 14579 / DSM 31 / CCUG 7414 / JCM 2152 / NBRC 15305 / NCIMB 9373 / NCTC 2599 / NRRL B-3711)</name>
    <dbReference type="NCBI Taxonomy" id="226900"/>
    <lineage>
        <taxon>Bacteria</taxon>
        <taxon>Bacillati</taxon>
        <taxon>Bacillota</taxon>
        <taxon>Bacilli</taxon>
        <taxon>Bacillales</taxon>
        <taxon>Bacillaceae</taxon>
        <taxon>Bacillus</taxon>
        <taxon>Bacillus cereus group</taxon>
    </lineage>
</organism>
<proteinExistence type="inferred from homology"/>
<sequence>MMEPFRIHKGTAAVLMNDNIDTDQIIPKQYLKRIERTGFGKFLFDEWRYDNNRQENPNFPLNAQERKGASILITGDNFGCGSSREHAPWALADYGFRVIIAGGFADIFYMNCMKNGMLPIVMDKDMREQLAKTDAREQITVDLENEIMTTNTHRFHFTIEKMWKEKLLNGLDEISITMQYEQEIKEYERKVALH</sequence>
<evidence type="ECO:0000255" key="1">
    <source>
        <dbReference type="HAMAP-Rule" id="MF_01031"/>
    </source>
</evidence>
<feature type="chain" id="PRO_0000141778" description="3-isopropylmalate dehydratase small subunit">
    <location>
        <begin position="1"/>
        <end position="194"/>
    </location>
</feature>
<protein>
    <recommendedName>
        <fullName evidence="1">3-isopropylmalate dehydratase small subunit</fullName>
        <ecNumber evidence="1">4.2.1.33</ecNumber>
    </recommendedName>
    <alternativeName>
        <fullName evidence="1">Alpha-IPM isomerase</fullName>
        <shortName evidence="1">IPMI</shortName>
    </alternativeName>
    <alternativeName>
        <fullName evidence="1">Isopropylmalate isomerase</fullName>
    </alternativeName>
</protein>
<keyword id="KW-0028">Amino-acid biosynthesis</keyword>
<keyword id="KW-0100">Branched-chain amino acid biosynthesis</keyword>
<keyword id="KW-0432">Leucine biosynthesis</keyword>
<keyword id="KW-0456">Lyase</keyword>
<keyword id="KW-1185">Reference proteome</keyword>